<evidence type="ECO:0000250" key="1"/>
<evidence type="ECO:0000255" key="2">
    <source>
        <dbReference type="PROSITE-ProRule" id="PRU10096"/>
    </source>
</evidence>
<evidence type="ECO:0000305" key="3"/>
<gene>
    <name type="ordered locus">MT2852</name>
</gene>
<organism>
    <name type="scientific">Mycobacterium tuberculosis (strain CDC 1551 / Oshkosh)</name>
    <dbReference type="NCBI Taxonomy" id="83331"/>
    <lineage>
        <taxon>Bacteria</taxon>
        <taxon>Bacillati</taxon>
        <taxon>Actinomycetota</taxon>
        <taxon>Actinomycetes</taxon>
        <taxon>Mycobacteriales</taxon>
        <taxon>Mycobacteriaceae</taxon>
        <taxon>Mycobacterium</taxon>
        <taxon>Mycobacterium tuberculosis complex</taxon>
    </lineage>
</organism>
<reference key="1">
    <citation type="journal article" date="2002" name="J. Bacteriol.">
        <title>Whole-genome comparison of Mycobacterium tuberculosis clinical and laboratory strains.</title>
        <authorList>
            <person name="Fleischmann R.D."/>
            <person name="Alland D."/>
            <person name="Eisen J.A."/>
            <person name="Carpenter L."/>
            <person name="White O."/>
            <person name="Peterson J.D."/>
            <person name="DeBoy R.T."/>
            <person name="Dodson R.J."/>
            <person name="Gwinn M.L."/>
            <person name="Haft D.H."/>
            <person name="Hickey E.K."/>
            <person name="Kolonay J.F."/>
            <person name="Nelson W.C."/>
            <person name="Umayam L.A."/>
            <person name="Ermolaeva M.D."/>
            <person name="Salzberg S.L."/>
            <person name="Delcher A."/>
            <person name="Utterback T.R."/>
            <person name="Weidman J.F."/>
            <person name="Khouri H.M."/>
            <person name="Gill J."/>
            <person name="Mikula A."/>
            <person name="Bishai W."/>
            <person name="Jacobs W.R. Jr."/>
            <person name="Venter J.C."/>
            <person name="Fraser C.M."/>
        </authorList>
    </citation>
    <scope>NUCLEOTIDE SEQUENCE [LARGE SCALE GENOMIC DNA]</scope>
    <source>
        <strain>CDC 1551 / Oshkosh</strain>
    </source>
</reference>
<protein>
    <recommendedName>
        <fullName>Uncharacterized zinc protease MT2852</fullName>
        <ecNumber>3.4.24.-</ecNumber>
    </recommendedName>
</protein>
<comment type="cofactor">
    <cofactor evidence="1">
        <name>Zn(2+)</name>
        <dbReference type="ChEBI" id="CHEBI:29105"/>
    </cofactor>
    <text evidence="1">Binds 1 zinc ion per subunit.</text>
</comment>
<comment type="similarity">
    <text evidence="3">Belongs to the peptidase M16 family.</text>
</comment>
<dbReference type="EC" id="3.4.24.-"/>
<dbReference type="EMBL" id="AE000516">
    <property type="protein sequence ID" value="AAK47171.1"/>
    <property type="molecule type" value="Genomic_DNA"/>
</dbReference>
<dbReference type="PIR" id="E70883">
    <property type="entry name" value="E70883"/>
</dbReference>
<dbReference type="RefSeq" id="WP_003899479.1">
    <property type="nucleotide sequence ID" value="NZ_KK341227.1"/>
</dbReference>
<dbReference type="SMR" id="P9WHT4"/>
<dbReference type="KEGG" id="mtc:MT2852"/>
<dbReference type="PATRIC" id="fig|83331.31.peg.3075"/>
<dbReference type="HOGENOM" id="CLU_009902_3_3_11"/>
<dbReference type="Proteomes" id="UP000001020">
    <property type="component" value="Chromosome"/>
</dbReference>
<dbReference type="GO" id="GO:0046872">
    <property type="term" value="F:metal ion binding"/>
    <property type="evidence" value="ECO:0007669"/>
    <property type="project" value="UniProtKB-KW"/>
</dbReference>
<dbReference type="GO" id="GO:0004222">
    <property type="term" value="F:metalloendopeptidase activity"/>
    <property type="evidence" value="ECO:0007669"/>
    <property type="project" value="InterPro"/>
</dbReference>
<dbReference type="GO" id="GO:0006508">
    <property type="term" value="P:proteolysis"/>
    <property type="evidence" value="ECO:0007669"/>
    <property type="project" value="UniProtKB-KW"/>
</dbReference>
<dbReference type="FunFam" id="3.30.830.10:FF:000008">
    <property type="entry name" value="Mitochondrial-processing peptidase subunit beta"/>
    <property type="match status" value="1"/>
</dbReference>
<dbReference type="FunFam" id="3.30.830.10:FF:000063">
    <property type="entry name" value="Zinc protease"/>
    <property type="match status" value="1"/>
</dbReference>
<dbReference type="Gene3D" id="3.30.830.10">
    <property type="entry name" value="Metalloenzyme, LuxS/M16 peptidase-like"/>
    <property type="match status" value="2"/>
</dbReference>
<dbReference type="InterPro" id="IPR011249">
    <property type="entry name" value="Metalloenz_LuxS/M16"/>
</dbReference>
<dbReference type="InterPro" id="IPR050361">
    <property type="entry name" value="MPP/UQCRC_Complex"/>
</dbReference>
<dbReference type="InterPro" id="IPR011765">
    <property type="entry name" value="Pept_M16_N"/>
</dbReference>
<dbReference type="InterPro" id="IPR001431">
    <property type="entry name" value="Pept_M16_Zn_BS"/>
</dbReference>
<dbReference type="InterPro" id="IPR007863">
    <property type="entry name" value="Peptidase_M16_C"/>
</dbReference>
<dbReference type="PANTHER" id="PTHR11851">
    <property type="entry name" value="METALLOPROTEASE"/>
    <property type="match status" value="1"/>
</dbReference>
<dbReference type="PANTHER" id="PTHR11851:SF49">
    <property type="entry name" value="MITOCHONDRIAL-PROCESSING PEPTIDASE SUBUNIT ALPHA"/>
    <property type="match status" value="1"/>
</dbReference>
<dbReference type="Pfam" id="PF00675">
    <property type="entry name" value="Peptidase_M16"/>
    <property type="match status" value="1"/>
</dbReference>
<dbReference type="Pfam" id="PF05193">
    <property type="entry name" value="Peptidase_M16_C"/>
    <property type="match status" value="1"/>
</dbReference>
<dbReference type="SUPFAM" id="SSF63411">
    <property type="entry name" value="LuxS/MPP-like metallohydrolase"/>
    <property type="match status" value="2"/>
</dbReference>
<dbReference type="PROSITE" id="PS00143">
    <property type="entry name" value="INSULINASE"/>
    <property type="match status" value="1"/>
</dbReference>
<keyword id="KW-0378">Hydrolase</keyword>
<keyword id="KW-0479">Metal-binding</keyword>
<keyword id="KW-0482">Metalloprotease</keyword>
<keyword id="KW-0645">Protease</keyword>
<keyword id="KW-1185">Reference proteome</keyword>
<keyword id="KW-0862">Zinc</keyword>
<accession>P9WHT4</accession>
<accession>L0TAV3</accession>
<accession>O33324</accession>
<accession>P0A5S8</accession>
<name>Y2782_MYCTO</name>
<feature type="chain" id="PRO_0000428127" description="Uncharacterized zinc protease MT2852">
    <location>
        <begin position="1"/>
        <end position="438"/>
    </location>
</feature>
<feature type="active site" description="Proton acceptor" evidence="2">
    <location>
        <position position="62"/>
    </location>
</feature>
<feature type="binding site" evidence="2">
    <location>
        <position position="59"/>
    </location>
    <ligand>
        <name>Zn(2+)</name>
        <dbReference type="ChEBI" id="CHEBI:29105"/>
    </ligand>
</feature>
<feature type="binding site" evidence="2">
    <location>
        <position position="63"/>
    </location>
    <ligand>
        <name>Zn(2+)</name>
        <dbReference type="ChEBI" id="CHEBI:29105"/>
    </ligand>
</feature>
<feature type="binding site" evidence="2">
    <location>
        <position position="139"/>
    </location>
    <ligand>
        <name>Zn(2+)</name>
        <dbReference type="ChEBI" id="CHEBI:29105"/>
    </ligand>
</feature>
<sequence length="438" mass="47103">MPRRSPADPAAALAPRRTTLPGGLRVVTEFLPAVHSASVGVWVGVGSRDEGATVAGAAHFLEHLLFKSTPTRSAVDIAQAMDAVGGELNAFTAKEHTCYYAHVLGSDLPLAVDLVADVVLNGRCAADDVEVERDVVLEEIAMRDDDPEDALADMFLAALFGDHPVGRPVIGSAQSVSVMTRAQLQSFHLRRYTPEWMVVAAAGNVDHDGLVALVREHFGSRLVRGRRPVAPRKGTGRVNGSPRLTLVSRDAEQTHVSLGIRTPGRGWEHRWALSVLHTALGGGLSSRLFQEVRETRGLAYSVYSALDLFADSGALSVYAACLPERFADVMRVTADVLESVARDGITEAECGIAKGSLRGGLVLGLEDSSSRMSRLGRSELNYGKHRSIEHTLRQIEQVTVEEVNAVARHLLSRRYGAAVLGPHGSKRSLPQQLRAMVG</sequence>
<proteinExistence type="inferred from homology"/>